<name>RSMC_HAEI8</name>
<reference key="1">
    <citation type="journal article" date="2005" name="J. Bacteriol.">
        <title>Genomic sequence of an otitis media isolate of nontypeable Haemophilus influenzae: comparative study with H. influenzae serotype d, strain KW20.</title>
        <authorList>
            <person name="Harrison A."/>
            <person name="Dyer D.W."/>
            <person name="Gillaspy A."/>
            <person name="Ray W.C."/>
            <person name="Mungur R."/>
            <person name="Carson M.B."/>
            <person name="Zhong H."/>
            <person name="Gipson J."/>
            <person name="Gipson M."/>
            <person name="Johnson L.S."/>
            <person name="Lewis L."/>
            <person name="Bakaletz L.O."/>
            <person name="Munson R.S. Jr."/>
        </authorList>
    </citation>
    <scope>NUCLEOTIDE SEQUENCE [LARGE SCALE GENOMIC DNA]</scope>
    <source>
        <strain>86-028NP</strain>
    </source>
</reference>
<comment type="function">
    <text evidence="1">Specifically methylates the guanine in position 1207 of 16S rRNA in the 30S particle.</text>
</comment>
<comment type="catalytic activity">
    <reaction evidence="1">
        <text>guanosine(1207) in 16S rRNA + S-adenosyl-L-methionine = N(2)-methylguanosine(1207) in 16S rRNA + S-adenosyl-L-homocysteine + H(+)</text>
        <dbReference type="Rhea" id="RHEA:42736"/>
        <dbReference type="Rhea" id="RHEA-COMP:10213"/>
        <dbReference type="Rhea" id="RHEA-COMP:10214"/>
        <dbReference type="ChEBI" id="CHEBI:15378"/>
        <dbReference type="ChEBI" id="CHEBI:57856"/>
        <dbReference type="ChEBI" id="CHEBI:59789"/>
        <dbReference type="ChEBI" id="CHEBI:74269"/>
        <dbReference type="ChEBI" id="CHEBI:74481"/>
        <dbReference type="EC" id="2.1.1.172"/>
    </reaction>
</comment>
<comment type="subunit">
    <text evidence="1">Monomer.</text>
</comment>
<comment type="subcellular location">
    <subcellularLocation>
        <location evidence="1">Cytoplasm</location>
    </subcellularLocation>
</comment>
<comment type="similarity">
    <text evidence="1">Belongs to the methyltransferase superfamily. RsmC family.</text>
</comment>
<gene>
    <name evidence="1" type="primary">rsmC</name>
    <name type="ordered locus">NTHI0016</name>
</gene>
<dbReference type="EC" id="2.1.1.172" evidence="1"/>
<dbReference type="EMBL" id="CP000057">
    <property type="protein sequence ID" value="AAX87015.1"/>
    <property type="molecule type" value="Genomic_DNA"/>
</dbReference>
<dbReference type="RefSeq" id="WP_011271782.1">
    <property type="nucleotide sequence ID" value="NC_007146.2"/>
</dbReference>
<dbReference type="SMR" id="Q4QPN2"/>
<dbReference type="GeneID" id="93220768"/>
<dbReference type="KEGG" id="hit:NTHI0016"/>
<dbReference type="HOGENOM" id="CLU_049581_0_1_6"/>
<dbReference type="Proteomes" id="UP000002525">
    <property type="component" value="Chromosome"/>
</dbReference>
<dbReference type="GO" id="GO:0005737">
    <property type="term" value="C:cytoplasm"/>
    <property type="evidence" value="ECO:0007669"/>
    <property type="project" value="UniProtKB-SubCell"/>
</dbReference>
<dbReference type="GO" id="GO:0052914">
    <property type="term" value="F:16S rRNA (guanine(1207)-N(2))-methyltransferase activity"/>
    <property type="evidence" value="ECO:0007669"/>
    <property type="project" value="UniProtKB-EC"/>
</dbReference>
<dbReference type="GO" id="GO:0003676">
    <property type="term" value="F:nucleic acid binding"/>
    <property type="evidence" value="ECO:0007669"/>
    <property type="project" value="InterPro"/>
</dbReference>
<dbReference type="CDD" id="cd02440">
    <property type="entry name" value="AdoMet_MTases"/>
    <property type="match status" value="1"/>
</dbReference>
<dbReference type="Gene3D" id="3.40.50.150">
    <property type="entry name" value="Vaccinia Virus protein VP39"/>
    <property type="match status" value="2"/>
</dbReference>
<dbReference type="HAMAP" id="MF_01862">
    <property type="entry name" value="16SrRNA_methyltr_C"/>
    <property type="match status" value="1"/>
</dbReference>
<dbReference type="InterPro" id="IPR002052">
    <property type="entry name" value="DNA_methylase_N6_adenine_CS"/>
</dbReference>
<dbReference type="InterPro" id="IPR013675">
    <property type="entry name" value="Mtase_sm_N"/>
</dbReference>
<dbReference type="InterPro" id="IPR023543">
    <property type="entry name" value="rRNA_ssu_MeTfrase_C"/>
</dbReference>
<dbReference type="InterPro" id="IPR046977">
    <property type="entry name" value="RsmC/RlmG"/>
</dbReference>
<dbReference type="InterPro" id="IPR029063">
    <property type="entry name" value="SAM-dependent_MTases_sf"/>
</dbReference>
<dbReference type="InterPro" id="IPR007848">
    <property type="entry name" value="Small_mtfrase_dom"/>
</dbReference>
<dbReference type="NCBIfam" id="NF007023">
    <property type="entry name" value="PRK09489.1"/>
    <property type="match status" value="1"/>
</dbReference>
<dbReference type="PANTHER" id="PTHR47816">
    <property type="entry name" value="RIBOSOMAL RNA SMALL SUBUNIT METHYLTRANSFERASE C"/>
    <property type="match status" value="1"/>
</dbReference>
<dbReference type="PANTHER" id="PTHR47816:SF4">
    <property type="entry name" value="RIBOSOMAL RNA SMALL SUBUNIT METHYLTRANSFERASE C"/>
    <property type="match status" value="1"/>
</dbReference>
<dbReference type="Pfam" id="PF05175">
    <property type="entry name" value="MTS"/>
    <property type="match status" value="1"/>
</dbReference>
<dbReference type="Pfam" id="PF08468">
    <property type="entry name" value="MTS_N"/>
    <property type="match status" value="1"/>
</dbReference>
<dbReference type="SUPFAM" id="SSF53335">
    <property type="entry name" value="S-adenosyl-L-methionine-dependent methyltransferases"/>
    <property type="match status" value="1"/>
</dbReference>
<evidence type="ECO:0000255" key="1">
    <source>
        <dbReference type="HAMAP-Rule" id="MF_01862"/>
    </source>
</evidence>
<accession>Q4QPN2</accession>
<keyword id="KW-0963">Cytoplasm</keyword>
<keyword id="KW-0489">Methyltransferase</keyword>
<keyword id="KW-0698">rRNA processing</keyword>
<keyword id="KW-0949">S-adenosyl-L-methionine</keyword>
<keyword id="KW-0808">Transferase</keyword>
<organism>
    <name type="scientific">Haemophilus influenzae (strain 86-028NP)</name>
    <dbReference type="NCBI Taxonomy" id="281310"/>
    <lineage>
        <taxon>Bacteria</taxon>
        <taxon>Pseudomonadati</taxon>
        <taxon>Pseudomonadota</taxon>
        <taxon>Gammaproteobacteria</taxon>
        <taxon>Pasteurellales</taxon>
        <taxon>Pasteurellaceae</taxon>
        <taxon>Haemophilus</taxon>
    </lineage>
</organism>
<protein>
    <recommendedName>
        <fullName evidence="1">Ribosomal RNA small subunit methyltransferase C</fullName>
        <ecNumber evidence="1">2.1.1.172</ecNumber>
    </recommendedName>
    <alternativeName>
        <fullName evidence="1">16S rRNA m2G1207 methyltransferase</fullName>
    </alternativeName>
    <alternativeName>
        <fullName evidence="1">rRNA (guanine-N(2)-)-methyltransferase RsmC</fullName>
    </alternativeName>
</protein>
<sequence>MISLESQVLERHLSFFDGKSVLFAGGISDNFPQTLASKCSSIQIWSCYFDYARTQSAVNFSVEFQGQADLIVYYWTKNKQEVNFQLIQLLAQASIGQEILIIGENRCGVRSVEKTLAPYGEIAKIDSARRCGLYHFSLQNKPHFELKNFWKTYQHPTIQDLTIYSLPGVFSAAELDTGTELLLSTIDNKIKGKVLDLGCGAGVIGSVIKKSSTNAQITMTDIHAMALESAHKTLSENQLQGEVYASDVFSDIEGKFDLIISNPPFHDGIDTAYRAVTELITQAKWHLNQGGELRIVANAFLPYPELLRQHFGDYEILAQTGKFKVYSVKN</sequence>
<feature type="chain" id="PRO_0000369718" description="Ribosomal RNA small subunit methyltransferase C">
    <location>
        <begin position="1"/>
        <end position="330"/>
    </location>
</feature>
<proteinExistence type="inferred from homology"/>